<proteinExistence type="evidence at protein level"/>
<comment type="function">
    <text evidence="1">As part of the MCIA complex, required for efficient assembly of the mitochondrial complex I.</text>
</comment>
<comment type="subunit">
    <text evidence="1">Part of the mitochondrial complex I assembly/MCIA complex that comprises at least the core subunits TMEM126B, NDUFAF1, ECSIT and ACAD9 and complement subunits such as COA1 and TMEM186. Interacts with MT-ND3.</text>
</comment>
<comment type="subcellular location">
    <subcellularLocation>
        <location evidence="1">Mitochondrion inner membrane</location>
        <topology evidence="1">Multi-pass membrane protein</topology>
    </subcellularLocation>
</comment>
<comment type="similarity">
    <text evidence="4">Belongs to the TMEM186 family.</text>
</comment>
<comment type="sequence caution" evidence="4">
    <conflict type="frameshift">
        <sequence resource="EMBL-CDS" id="BAC25393"/>
    </conflict>
</comment>
<evidence type="ECO:0000250" key="1">
    <source>
        <dbReference type="UniProtKB" id="Q96B77"/>
    </source>
</evidence>
<evidence type="ECO:0000255" key="2"/>
<evidence type="ECO:0000256" key="3">
    <source>
        <dbReference type="SAM" id="MobiDB-lite"/>
    </source>
</evidence>
<evidence type="ECO:0000305" key="4"/>
<evidence type="ECO:0000312" key="5">
    <source>
        <dbReference type="MGI" id="MGI:1913940"/>
    </source>
</evidence>
<name>TM186_MOUSE</name>
<gene>
    <name evidence="5" type="primary">Tmem186</name>
</gene>
<reference key="1">
    <citation type="journal article" date="2005" name="Science">
        <title>The transcriptional landscape of the mammalian genome.</title>
        <authorList>
            <person name="Carninci P."/>
            <person name="Kasukawa T."/>
            <person name="Katayama S."/>
            <person name="Gough J."/>
            <person name="Frith M.C."/>
            <person name="Maeda N."/>
            <person name="Oyama R."/>
            <person name="Ravasi T."/>
            <person name="Lenhard B."/>
            <person name="Wells C."/>
            <person name="Kodzius R."/>
            <person name="Shimokawa K."/>
            <person name="Bajic V.B."/>
            <person name="Brenner S.E."/>
            <person name="Batalov S."/>
            <person name="Forrest A.R."/>
            <person name="Zavolan M."/>
            <person name="Davis M.J."/>
            <person name="Wilming L.G."/>
            <person name="Aidinis V."/>
            <person name="Allen J.E."/>
            <person name="Ambesi-Impiombato A."/>
            <person name="Apweiler R."/>
            <person name="Aturaliya R.N."/>
            <person name="Bailey T.L."/>
            <person name="Bansal M."/>
            <person name="Baxter L."/>
            <person name="Beisel K.W."/>
            <person name="Bersano T."/>
            <person name="Bono H."/>
            <person name="Chalk A.M."/>
            <person name="Chiu K.P."/>
            <person name="Choudhary V."/>
            <person name="Christoffels A."/>
            <person name="Clutterbuck D.R."/>
            <person name="Crowe M.L."/>
            <person name="Dalla E."/>
            <person name="Dalrymple B.P."/>
            <person name="de Bono B."/>
            <person name="Della Gatta G."/>
            <person name="di Bernardo D."/>
            <person name="Down T."/>
            <person name="Engstrom P."/>
            <person name="Fagiolini M."/>
            <person name="Faulkner G."/>
            <person name="Fletcher C.F."/>
            <person name="Fukushima T."/>
            <person name="Furuno M."/>
            <person name="Futaki S."/>
            <person name="Gariboldi M."/>
            <person name="Georgii-Hemming P."/>
            <person name="Gingeras T.R."/>
            <person name="Gojobori T."/>
            <person name="Green R.E."/>
            <person name="Gustincich S."/>
            <person name="Harbers M."/>
            <person name="Hayashi Y."/>
            <person name="Hensch T.K."/>
            <person name="Hirokawa N."/>
            <person name="Hill D."/>
            <person name="Huminiecki L."/>
            <person name="Iacono M."/>
            <person name="Ikeo K."/>
            <person name="Iwama A."/>
            <person name="Ishikawa T."/>
            <person name="Jakt M."/>
            <person name="Kanapin A."/>
            <person name="Katoh M."/>
            <person name="Kawasawa Y."/>
            <person name="Kelso J."/>
            <person name="Kitamura H."/>
            <person name="Kitano H."/>
            <person name="Kollias G."/>
            <person name="Krishnan S.P."/>
            <person name="Kruger A."/>
            <person name="Kummerfeld S.K."/>
            <person name="Kurochkin I.V."/>
            <person name="Lareau L.F."/>
            <person name="Lazarevic D."/>
            <person name="Lipovich L."/>
            <person name="Liu J."/>
            <person name="Liuni S."/>
            <person name="McWilliam S."/>
            <person name="Madan Babu M."/>
            <person name="Madera M."/>
            <person name="Marchionni L."/>
            <person name="Matsuda H."/>
            <person name="Matsuzawa S."/>
            <person name="Miki H."/>
            <person name="Mignone F."/>
            <person name="Miyake S."/>
            <person name="Morris K."/>
            <person name="Mottagui-Tabar S."/>
            <person name="Mulder N."/>
            <person name="Nakano N."/>
            <person name="Nakauchi H."/>
            <person name="Ng P."/>
            <person name="Nilsson R."/>
            <person name="Nishiguchi S."/>
            <person name="Nishikawa S."/>
            <person name="Nori F."/>
            <person name="Ohara O."/>
            <person name="Okazaki Y."/>
            <person name="Orlando V."/>
            <person name="Pang K.C."/>
            <person name="Pavan W.J."/>
            <person name="Pavesi G."/>
            <person name="Pesole G."/>
            <person name="Petrovsky N."/>
            <person name="Piazza S."/>
            <person name="Reed J."/>
            <person name="Reid J.F."/>
            <person name="Ring B.Z."/>
            <person name="Ringwald M."/>
            <person name="Rost B."/>
            <person name="Ruan Y."/>
            <person name="Salzberg S.L."/>
            <person name="Sandelin A."/>
            <person name="Schneider C."/>
            <person name="Schoenbach C."/>
            <person name="Sekiguchi K."/>
            <person name="Semple C.A."/>
            <person name="Seno S."/>
            <person name="Sessa L."/>
            <person name="Sheng Y."/>
            <person name="Shibata Y."/>
            <person name="Shimada H."/>
            <person name="Shimada K."/>
            <person name="Silva D."/>
            <person name="Sinclair B."/>
            <person name="Sperling S."/>
            <person name="Stupka E."/>
            <person name="Sugiura K."/>
            <person name="Sultana R."/>
            <person name="Takenaka Y."/>
            <person name="Taki K."/>
            <person name="Tammoja K."/>
            <person name="Tan S.L."/>
            <person name="Tang S."/>
            <person name="Taylor M.S."/>
            <person name="Tegner J."/>
            <person name="Teichmann S.A."/>
            <person name="Ueda H.R."/>
            <person name="van Nimwegen E."/>
            <person name="Verardo R."/>
            <person name="Wei C.L."/>
            <person name="Yagi K."/>
            <person name="Yamanishi H."/>
            <person name="Zabarovsky E."/>
            <person name="Zhu S."/>
            <person name="Zimmer A."/>
            <person name="Hide W."/>
            <person name="Bult C."/>
            <person name="Grimmond S.M."/>
            <person name="Teasdale R.D."/>
            <person name="Liu E.T."/>
            <person name="Brusic V."/>
            <person name="Quackenbush J."/>
            <person name="Wahlestedt C."/>
            <person name="Mattick J.S."/>
            <person name="Hume D.A."/>
            <person name="Kai C."/>
            <person name="Sasaki D."/>
            <person name="Tomaru Y."/>
            <person name="Fukuda S."/>
            <person name="Kanamori-Katayama M."/>
            <person name="Suzuki M."/>
            <person name="Aoki J."/>
            <person name="Arakawa T."/>
            <person name="Iida J."/>
            <person name="Imamura K."/>
            <person name="Itoh M."/>
            <person name="Kato T."/>
            <person name="Kawaji H."/>
            <person name="Kawagashira N."/>
            <person name="Kawashima T."/>
            <person name="Kojima M."/>
            <person name="Kondo S."/>
            <person name="Konno H."/>
            <person name="Nakano K."/>
            <person name="Ninomiya N."/>
            <person name="Nishio T."/>
            <person name="Okada M."/>
            <person name="Plessy C."/>
            <person name="Shibata K."/>
            <person name="Shiraki T."/>
            <person name="Suzuki S."/>
            <person name="Tagami M."/>
            <person name="Waki K."/>
            <person name="Watahiki A."/>
            <person name="Okamura-Oho Y."/>
            <person name="Suzuki H."/>
            <person name="Kawai J."/>
            <person name="Hayashizaki Y."/>
        </authorList>
    </citation>
    <scope>NUCLEOTIDE SEQUENCE [LARGE SCALE MRNA]</scope>
    <source>
        <strain>C57BL/6J</strain>
        <strain>NOD</strain>
        <tissue>Cecum</tissue>
        <tissue>Liver</tissue>
        <tissue>Thymus</tissue>
        <tissue>Tongue</tissue>
    </source>
</reference>
<reference key="2">
    <citation type="journal article" date="2010" name="Cell">
        <title>A tissue-specific atlas of mouse protein phosphorylation and expression.</title>
        <authorList>
            <person name="Huttlin E.L."/>
            <person name="Jedrychowski M.P."/>
            <person name="Elias J.E."/>
            <person name="Goswami T."/>
            <person name="Rad R."/>
            <person name="Beausoleil S.A."/>
            <person name="Villen J."/>
            <person name="Haas W."/>
            <person name="Sowa M.E."/>
            <person name="Gygi S.P."/>
        </authorList>
    </citation>
    <scope>IDENTIFICATION BY MASS SPECTROMETRY [LARGE SCALE ANALYSIS]</scope>
    <source>
        <tissue>Brain</tissue>
        <tissue>Brown adipose tissue</tissue>
        <tissue>Heart</tissue>
        <tissue>Kidney</tissue>
        <tissue>Liver</tissue>
        <tissue>Lung</tissue>
        <tissue>Pancreas</tissue>
        <tissue>Testis</tissue>
    </source>
</reference>
<keyword id="KW-0472">Membrane</keyword>
<keyword id="KW-0496">Mitochondrion</keyword>
<keyword id="KW-0999">Mitochondrion inner membrane</keyword>
<keyword id="KW-1185">Reference proteome</keyword>
<keyword id="KW-0812">Transmembrane</keyword>
<keyword id="KW-1133">Transmembrane helix</keyword>
<protein>
    <recommendedName>
        <fullName evidence="4">Transmembrane protein 186</fullName>
    </recommendedName>
</protein>
<sequence>MAFLLRVVPRLQGPTAWRRPLQGLWCCSGQGDSKRWVGSRSPHSREKSPGTETETFHTIYRFRAIRAIGFLSRLKLAQTAVTVVALPPGFYCYSQGLMTLSSLCLLGGVASFALAMLCWMSHFFRRLVGILYVNESGTLLRVAHLTFWGWRQDTYCAVSDMIPLSESQERVQDVFVRIQQYSGKQTFYLTLRYGRILDRERFAQVFGTLATLKNSK</sequence>
<dbReference type="EMBL" id="AK009236">
    <property type="protein sequence ID" value="BAB26157.2"/>
    <property type="molecule type" value="mRNA"/>
</dbReference>
<dbReference type="EMBL" id="AK013147">
    <property type="protein sequence ID" value="BAC25393.1"/>
    <property type="status" value="ALT_FRAME"/>
    <property type="molecule type" value="mRNA"/>
</dbReference>
<dbReference type="EMBL" id="AK014478">
    <property type="protein sequence ID" value="BAB29381.2"/>
    <property type="molecule type" value="mRNA"/>
</dbReference>
<dbReference type="EMBL" id="AK033686">
    <property type="protein sequence ID" value="BAC28430.1"/>
    <property type="molecule type" value="mRNA"/>
</dbReference>
<dbReference type="EMBL" id="AK088656">
    <property type="protein sequence ID" value="BAC40482.1"/>
    <property type="molecule type" value="mRNA"/>
</dbReference>
<dbReference type="EMBL" id="AK159727">
    <property type="protein sequence ID" value="BAE35321.1"/>
    <property type="molecule type" value="mRNA"/>
</dbReference>
<dbReference type="EMBL" id="AK159782">
    <property type="protein sequence ID" value="BAE35366.1"/>
    <property type="molecule type" value="mRNA"/>
</dbReference>
<dbReference type="CCDS" id="CCDS27940.1"/>
<dbReference type="RefSeq" id="NP_079984.2">
    <property type="nucleotide sequence ID" value="NM_025708.4"/>
</dbReference>
<dbReference type="FunCoup" id="Q9CR76">
    <property type="interactions" value="3217"/>
</dbReference>
<dbReference type="STRING" id="10090.ENSMUSP00000053862"/>
<dbReference type="iPTMnet" id="Q9CR76"/>
<dbReference type="PhosphoSitePlus" id="Q9CR76"/>
<dbReference type="jPOST" id="Q9CR76"/>
<dbReference type="PaxDb" id="10090-ENSMUSP00000053862"/>
<dbReference type="ProteomicsDB" id="259543"/>
<dbReference type="Pumba" id="Q9CR76"/>
<dbReference type="Antibodypedia" id="3062">
    <property type="antibodies" value="40 antibodies from 10 providers"/>
</dbReference>
<dbReference type="DNASU" id="66690"/>
<dbReference type="Ensembl" id="ENSMUST00000052505.10">
    <property type="protein sequence ID" value="ENSMUSP00000053862.9"/>
    <property type="gene ID" value="ENSMUSG00000043140.11"/>
</dbReference>
<dbReference type="GeneID" id="66690"/>
<dbReference type="KEGG" id="mmu:66690"/>
<dbReference type="UCSC" id="uc007ycq.1">
    <property type="organism name" value="mouse"/>
</dbReference>
<dbReference type="AGR" id="MGI:1913940"/>
<dbReference type="CTD" id="25880"/>
<dbReference type="MGI" id="MGI:1913940">
    <property type="gene designation" value="Tmem186"/>
</dbReference>
<dbReference type="VEuPathDB" id="HostDB:ENSMUSG00000043140"/>
<dbReference type="eggNOG" id="ENOG502S11D">
    <property type="taxonomic scope" value="Eukaryota"/>
</dbReference>
<dbReference type="GeneTree" id="ENSGT00390000000087"/>
<dbReference type="HOGENOM" id="CLU_104872_1_0_1"/>
<dbReference type="InParanoid" id="Q9CR76"/>
<dbReference type="OMA" id="MTIGDTG"/>
<dbReference type="OrthoDB" id="6147888at2759"/>
<dbReference type="PhylomeDB" id="Q9CR76"/>
<dbReference type="TreeFam" id="TF326623"/>
<dbReference type="Reactome" id="R-MMU-611105">
    <property type="pathway name" value="Respiratory electron transport"/>
</dbReference>
<dbReference type="Reactome" id="R-MMU-6799198">
    <property type="pathway name" value="Complex I biogenesis"/>
</dbReference>
<dbReference type="BioGRID-ORCS" id="66690">
    <property type="hits" value="1 hit in 76 CRISPR screens"/>
</dbReference>
<dbReference type="ChiTaRS" id="Tmem186">
    <property type="organism name" value="mouse"/>
</dbReference>
<dbReference type="PRO" id="PR:Q9CR76"/>
<dbReference type="Proteomes" id="UP000000589">
    <property type="component" value="Chromosome 16"/>
</dbReference>
<dbReference type="RNAct" id="Q9CR76">
    <property type="molecule type" value="protein"/>
</dbReference>
<dbReference type="Bgee" id="ENSMUSG00000043140">
    <property type="expression patterns" value="Expressed in floor plate of midbrain and 249 other cell types or tissues"/>
</dbReference>
<dbReference type="ExpressionAtlas" id="Q9CR76">
    <property type="expression patterns" value="baseline and differential"/>
</dbReference>
<dbReference type="GO" id="GO:0005743">
    <property type="term" value="C:mitochondrial inner membrane"/>
    <property type="evidence" value="ECO:0007669"/>
    <property type="project" value="UniProtKB-SubCell"/>
</dbReference>
<dbReference type="GO" id="GO:0005739">
    <property type="term" value="C:mitochondrion"/>
    <property type="evidence" value="ECO:0007005"/>
    <property type="project" value="MGI"/>
</dbReference>
<dbReference type="GO" id="GO:0032981">
    <property type="term" value="P:mitochondrial respiratory chain complex I assembly"/>
    <property type="evidence" value="ECO:0000250"/>
    <property type="project" value="UniProtKB"/>
</dbReference>
<dbReference type="InterPro" id="IPR026571">
    <property type="entry name" value="Tmem186"/>
</dbReference>
<dbReference type="PANTHER" id="PTHR13603">
    <property type="entry name" value="TRANSMEMBRANE PROTEIN 186"/>
    <property type="match status" value="1"/>
</dbReference>
<dbReference type="PANTHER" id="PTHR13603:SF1">
    <property type="entry name" value="TRANSMEMBRANE PROTEIN 186"/>
    <property type="match status" value="1"/>
</dbReference>
<accession>Q9CR76</accession>
<accession>Q8BHA7</accession>
<accession>Q8BHT1</accession>
<organism>
    <name type="scientific">Mus musculus</name>
    <name type="common">Mouse</name>
    <dbReference type="NCBI Taxonomy" id="10090"/>
    <lineage>
        <taxon>Eukaryota</taxon>
        <taxon>Metazoa</taxon>
        <taxon>Chordata</taxon>
        <taxon>Craniata</taxon>
        <taxon>Vertebrata</taxon>
        <taxon>Euteleostomi</taxon>
        <taxon>Mammalia</taxon>
        <taxon>Eutheria</taxon>
        <taxon>Euarchontoglires</taxon>
        <taxon>Glires</taxon>
        <taxon>Rodentia</taxon>
        <taxon>Myomorpha</taxon>
        <taxon>Muroidea</taxon>
        <taxon>Muridae</taxon>
        <taxon>Murinae</taxon>
        <taxon>Mus</taxon>
        <taxon>Mus</taxon>
    </lineage>
</organism>
<feature type="chain" id="PRO_0000279440" description="Transmembrane protein 186">
    <location>
        <begin position="1"/>
        <end position="216"/>
    </location>
</feature>
<feature type="topological domain" description="Mitochondrial matrix" evidence="4">
    <location>
        <begin position="1"/>
        <end position="68"/>
    </location>
</feature>
<feature type="transmembrane region" description="Helical" evidence="2">
    <location>
        <begin position="69"/>
        <end position="91"/>
    </location>
</feature>
<feature type="topological domain" description="Mitochondrial intermembrane" evidence="4">
    <location>
        <begin position="92"/>
        <end position="103"/>
    </location>
</feature>
<feature type="transmembrane region" description="Helical" evidence="2">
    <location>
        <begin position="104"/>
        <end position="124"/>
    </location>
</feature>
<feature type="topological domain" description="Mitochondrial matrix" evidence="4">
    <location>
        <begin position="125"/>
        <end position="216"/>
    </location>
</feature>
<feature type="region of interest" description="Disordered" evidence="3">
    <location>
        <begin position="31"/>
        <end position="52"/>
    </location>
</feature>
<feature type="sequence conflict" description="In Ref. 1; BAC25393." evidence="4" ref="1">
    <original>G</original>
    <variation>D</variation>
    <location>
        <position position="183"/>
    </location>
</feature>